<name>KLC4_RAT</name>
<proteinExistence type="evidence at protein level"/>
<organism>
    <name type="scientific">Rattus norvegicus</name>
    <name type="common">Rat</name>
    <dbReference type="NCBI Taxonomy" id="10116"/>
    <lineage>
        <taxon>Eukaryota</taxon>
        <taxon>Metazoa</taxon>
        <taxon>Chordata</taxon>
        <taxon>Craniata</taxon>
        <taxon>Vertebrata</taxon>
        <taxon>Euteleostomi</taxon>
        <taxon>Mammalia</taxon>
        <taxon>Eutheria</taxon>
        <taxon>Euarchontoglires</taxon>
        <taxon>Glires</taxon>
        <taxon>Rodentia</taxon>
        <taxon>Myomorpha</taxon>
        <taxon>Muroidea</taxon>
        <taxon>Muridae</taxon>
        <taxon>Murinae</taxon>
        <taxon>Rattus</taxon>
    </lineage>
</organism>
<keyword id="KW-0007">Acetylation</keyword>
<keyword id="KW-0175">Coiled coil</keyword>
<keyword id="KW-0963">Cytoplasm</keyword>
<keyword id="KW-0206">Cytoskeleton</keyword>
<keyword id="KW-0493">Microtubule</keyword>
<keyword id="KW-0505">Motor protein</keyword>
<keyword id="KW-0597">Phosphoprotein</keyword>
<keyword id="KW-1185">Reference proteome</keyword>
<keyword id="KW-0677">Repeat</keyword>
<keyword id="KW-0802">TPR repeat</keyword>
<protein>
    <recommendedName>
        <fullName>Kinesin light chain 4</fullName>
        <shortName>KLC 4</shortName>
    </recommendedName>
    <alternativeName>
        <fullName>Kinesin-like protein 8</fullName>
    </alternativeName>
</protein>
<reference key="1">
    <citation type="journal article" date="2004" name="Genome Res.">
        <title>The status, quality, and expansion of the NIH full-length cDNA project: the Mammalian Gene Collection (MGC).</title>
        <authorList>
            <consortium name="The MGC Project Team"/>
        </authorList>
    </citation>
    <scope>NUCLEOTIDE SEQUENCE [LARGE SCALE MRNA]</scope>
    <source>
        <tissue>Heart</tissue>
    </source>
</reference>
<reference key="2">
    <citation type="journal article" date="2012" name="Nat. Commun.">
        <title>Quantitative maps of protein phosphorylation sites across 14 different rat organs and tissues.</title>
        <authorList>
            <person name="Lundby A."/>
            <person name="Secher A."/>
            <person name="Lage K."/>
            <person name="Nordsborg N.B."/>
            <person name="Dmytriyev A."/>
            <person name="Lundby C."/>
            <person name="Olsen J.V."/>
        </authorList>
    </citation>
    <scope>PHOSPHORYLATION [LARGE SCALE ANALYSIS] AT SER-565; SER-566 AND SER-590</scope>
    <scope>IDENTIFICATION BY MASS SPECTROMETRY [LARGE SCALE ANALYSIS]</scope>
</reference>
<dbReference type="EMBL" id="BC087116">
    <property type="protein sequence ID" value="AAH87116.1"/>
    <property type="molecule type" value="mRNA"/>
</dbReference>
<dbReference type="RefSeq" id="NP_001009601.1">
    <property type="nucleotide sequence ID" value="NM_001009601.2"/>
</dbReference>
<dbReference type="RefSeq" id="NP_001419522.1">
    <property type="nucleotide sequence ID" value="NM_001432593.1"/>
</dbReference>
<dbReference type="RefSeq" id="NP_001419523.1">
    <property type="nucleotide sequence ID" value="NM_001432594.1"/>
</dbReference>
<dbReference type="RefSeq" id="NP_001419524.1">
    <property type="nucleotide sequence ID" value="NM_001432595.1"/>
</dbReference>
<dbReference type="RefSeq" id="XP_006244578.1">
    <property type="nucleotide sequence ID" value="XM_006244516.3"/>
</dbReference>
<dbReference type="RefSeq" id="XP_006244579.1">
    <property type="nucleotide sequence ID" value="XM_006244517.3"/>
</dbReference>
<dbReference type="SMR" id="Q5PQM2"/>
<dbReference type="FunCoup" id="Q5PQM2">
    <property type="interactions" value="1739"/>
</dbReference>
<dbReference type="IntAct" id="Q5PQM2">
    <property type="interactions" value="3"/>
</dbReference>
<dbReference type="STRING" id="10116.ENSRNOP00000038363"/>
<dbReference type="iPTMnet" id="Q5PQM2"/>
<dbReference type="PhosphoSitePlus" id="Q5PQM2"/>
<dbReference type="jPOST" id="Q5PQM2"/>
<dbReference type="PaxDb" id="10116-ENSRNOP00000038363"/>
<dbReference type="Ensembl" id="ENSRNOT00000031625.4">
    <property type="protein sequence ID" value="ENSRNOP00000038363.3"/>
    <property type="gene ID" value="ENSRNOG00000018168.8"/>
</dbReference>
<dbReference type="GeneID" id="316226"/>
<dbReference type="KEGG" id="rno:316226"/>
<dbReference type="UCSC" id="RGD:1306555">
    <property type="organism name" value="rat"/>
</dbReference>
<dbReference type="AGR" id="RGD:1306555"/>
<dbReference type="CTD" id="89953"/>
<dbReference type="RGD" id="1306555">
    <property type="gene designation" value="Klc4"/>
</dbReference>
<dbReference type="eggNOG" id="KOG1840">
    <property type="taxonomic scope" value="Eukaryota"/>
</dbReference>
<dbReference type="GeneTree" id="ENSGT00940000161323"/>
<dbReference type="InParanoid" id="Q5PQM2"/>
<dbReference type="OMA" id="LQHEGHE"/>
<dbReference type="OrthoDB" id="413723at2759"/>
<dbReference type="PhylomeDB" id="Q5PQM2"/>
<dbReference type="TreeFam" id="TF314010"/>
<dbReference type="Reactome" id="R-RNO-2132295">
    <property type="pathway name" value="MHC class II antigen presentation"/>
</dbReference>
<dbReference type="Reactome" id="R-RNO-5625970">
    <property type="pathway name" value="RHO GTPases activate KTN1"/>
</dbReference>
<dbReference type="Reactome" id="R-RNO-6811434">
    <property type="pathway name" value="COPI-dependent Golgi-to-ER retrograde traffic"/>
</dbReference>
<dbReference type="Reactome" id="R-RNO-983189">
    <property type="pathway name" value="Kinesins"/>
</dbReference>
<dbReference type="PRO" id="PR:Q5PQM2"/>
<dbReference type="Proteomes" id="UP000002494">
    <property type="component" value="Chromosome 9"/>
</dbReference>
<dbReference type="Bgee" id="ENSRNOG00000018168">
    <property type="expression patterns" value="Expressed in jejunum and 19 other cell types or tissues"/>
</dbReference>
<dbReference type="GO" id="GO:0005737">
    <property type="term" value="C:cytoplasm"/>
    <property type="evidence" value="ECO:0000318"/>
    <property type="project" value="GO_Central"/>
</dbReference>
<dbReference type="GO" id="GO:0005871">
    <property type="term" value="C:kinesin complex"/>
    <property type="evidence" value="ECO:0007669"/>
    <property type="project" value="InterPro"/>
</dbReference>
<dbReference type="GO" id="GO:0005874">
    <property type="term" value="C:microtubule"/>
    <property type="evidence" value="ECO:0007669"/>
    <property type="project" value="UniProtKB-KW"/>
</dbReference>
<dbReference type="GO" id="GO:0019894">
    <property type="term" value="F:kinesin binding"/>
    <property type="evidence" value="ECO:0000318"/>
    <property type="project" value="GO_Central"/>
</dbReference>
<dbReference type="GO" id="GO:0007018">
    <property type="term" value="P:microtubule-based movement"/>
    <property type="evidence" value="ECO:0000318"/>
    <property type="project" value="GO_Central"/>
</dbReference>
<dbReference type="FunFam" id="1.25.40.10:FF:000003">
    <property type="entry name" value="kinesin light chain isoform X1"/>
    <property type="match status" value="1"/>
</dbReference>
<dbReference type="Gene3D" id="1.10.287.2610">
    <property type="match status" value="1"/>
</dbReference>
<dbReference type="Gene3D" id="1.25.40.10">
    <property type="entry name" value="Tetratricopeptide repeat domain"/>
    <property type="match status" value="1"/>
</dbReference>
<dbReference type="InterPro" id="IPR002151">
    <property type="entry name" value="Kinesin_light"/>
</dbReference>
<dbReference type="InterPro" id="IPR015792">
    <property type="entry name" value="Kinesin_light_repeat"/>
</dbReference>
<dbReference type="InterPro" id="IPR011990">
    <property type="entry name" value="TPR-like_helical_dom_sf"/>
</dbReference>
<dbReference type="InterPro" id="IPR019734">
    <property type="entry name" value="TPR_rpt"/>
</dbReference>
<dbReference type="PANTHER" id="PTHR45783">
    <property type="entry name" value="KINESIN LIGHT CHAIN"/>
    <property type="match status" value="1"/>
</dbReference>
<dbReference type="PANTHER" id="PTHR45783:SF6">
    <property type="entry name" value="KINESIN LIGHT CHAIN 4"/>
    <property type="match status" value="1"/>
</dbReference>
<dbReference type="Pfam" id="PF13374">
    <property type="entry name" value="TPR_10"/>
    <property type="match status" value="2"/>
</dbReference>
<dbReference type="Pfam" id="PF13424">
    <property type="entry name" value="TPR_12"/>
    <property type="match status" value="2"/>
</dbReference>
<dbReference type="PRINTS" id="PR00381">
    <property type="entry name" value="KINESINLIGHT"/>
</dbReference>
<dbReference type="SMART" id="SM00028">
    <property type="entry name" value="TPR"/>
    <property type="match status" value="5"/>
</dbReference>
<dbReference type="SUPFAM" id="SSF48452">
    <property type="entry name" value="TPR-like"/>
    <property type="match status" value="2"/>
</dbReference>
<dbReference type="PROSITE" id="PS01160">
    <property type="entry name" value="KINESIN_LIGHT"/>
    <property type="match status" value="3"/>
</dbReference>
<dbReference type="PROSITE" id="PS50005">
    <property type="entry name" value="TPR"/>
    <property type="match status" value="6"/>
</dbReference>
<dbReference type="PROSITE" id="PS50293">
    <property type="entry name" value="TPR_REGION"/>
    <property type="match status" value="2"/>
</dbReference>
<comment type="function">
    <text evidence="1">Kinesin is a microtubule-associated force-producing protein that may play a role in organelle transport. The light chain may function in coupling of cargo to the heavy chain or in the modulation of its ATPase activity (By similarity).</text>
</comment>
<comment type="subunit">
    <text evidence="1">Oligomeric complex composed of two heavy chains and two light chains.</text>
</comment>
<comment type="subcellular location">
    <subcellularLocation>
        <location evidence="6">Cytoplasm</location>
        <location evidence="6">Cytoskeleton</location>
    </subcellularLocation>
</comment>
<comment type="similarity">
    <text evidence="6">Belongs to the kinesin light chain family.</text>
</comment>
<sequence>MSGLVLGQRDEPAGHRLSQEEILGSTRLVSQGLESLHSEHQAVLQSLSHTIECLQQGGHEEGLVHEKARQLRRSMENIELGLSEAQVMLALASHLSTVESEKQKLRAQVRRLCQENQWLRDELAGTQQRLQRSEQAVAQLEEEKKHLEFLRQLRQYDEDGHSMEEKEGDASKDSLDDLFPNEEEEDSSNDLSRGQGAAAAQQGGYEIPARLRTLHNLVIQYAAQGRYEVAVPLCKQALEDLERTSGRGHPDVATMLNILALVYRDQNKYKEAAHLLNDALSIRESTLGRDHPAVAATLNNLAVLYGKRGKYKEAEPLCQRALEIREKVLGTDHPDVAKQLNNLALLCQNQGKYEAVERYYQRALAIYERQLGPDNPNVARTKNNLASCYLKQGKYSEAETLYKEILTRAHVQEFGSVDDDHKPIWMHAEEREEMSRSRSRESGTPYAEYGGWYKACRVSSPTVNTTLRNLGALYRRQGKLEAAETLEECALRSRKQGTDPISQTKVAELLGEGDGRKTMQEGPGDSVKFEGGEDASVAVEWSGDGSGTLQRSGSLGKIRDVLRRSSELLVRKLQGTEPRPSSSNMKRAASLNYLNQPNAAPLQTSRGLSASTVDLSSSS</sequence>
<gene>
    <name type="primary">Klc4</name>
    <name type="synonym">Knsl8</name>
</gene>
<accession>Q5PQM2</accession>
<feature type="initiator methionine" description="Removed" evidence="3">
    <location>
        <position position="1"/>
    </location>
</feature>
<feature type="chain" id="PRO_0000384582" description="Kinesin light chain 4">
    <location>
        <begin position="2"/>
        <end position="619"/>
    </location>
</feature>
<feature type="repeat" description="TPR 1">
    <location>
        <begin position="55"/>
        <end position="88"/>
    </location>
</feature>
<feature type="repeat" description="TPR 2">
    <location>
        <begin position="211"/>
        <end position="244"/>
    </location>
</feature>
<feature type="repeat" description="TPR 3">
    <location>
        <begin position="253"/>
        <end position="286"/>
    </location>
</feature>
<feature type="repeat" description="TPR 4">
    <location>
        <begin position="295"/>
        <end position="328"/>
    </location>
</feature>
<feature type="repeat" description="TPR 5">
    <location>
        <begin position="337"/>
        <end position="370"/>
    </location>
</feature>
<feature type="repeat" description="TPR 6">
    <location>
        <begin position="379"/>
        <end position="412"/>
    </location>
</feature>
<feature type="repeat" description="TPR 7">
    <location>
        <begin position="464"/>
        <end position="497"/>
    </location>
</feature>
<feature type="region of interest" description="Disordered" evidence="5">
    <location>
        <begin position="156"/>
        <end position="200"/>
    </location>
</feature>
<feature type="region of interest" description="Disordered" evidence="5">
    <location>
        <begin position="571"/>
        <end position="619"/>
    </location>
</feature>
<feature type="coiled-coil region" evidence="4">
    <location>
        <begin position="32"/>
        <end position="150"/>
    </location>
</feature>
<feature type="compositionally biased region" description="Basic and acidic residues" evidence="5">
    <location>
        <begin position="156"/>
        <end position="175"/>
    </location>
</feature>
<feature type="compositionally biased region" description="Acidic residues" evidence="5">
    <location>
        <begin position="179"/>
        <end position="188"/>
    </location>
</feature>
<feature type="compositionally biased region" description="Polar residues" evidence="5">
    <location>
        <begin position="592"/>
        <end position="608"/>
    </location>
</feature>
<feature type="compositionally biased region" description="Low complexity" evidence="5">
    <location>
        <begin position="609"/>
        <end position="619"/>
    </location>
</feature>
<feature type="modified residue" description="N-acetylserine" evidence="3">
    <location>
        <position position="2"/>
    </location>
</feature>
<feature type="modified residue" description="Phosphoserine" evidence="2">
    <location>
        <position position="174"/>
    </location>
</feature>
<feature type="modified residue" description="Phosphoserine" evidence="3">
    <location>
        <position position="460"/>
    </location>
</feature>
<feature type="modified residue" description="Phosphoserine" evidence="7">
    <location>
        <position position="565"/>
    </location>
</feature>
<feature type="modified residue" description="Phosphoserine" evidence="7">
    <location>
        <position position="566"/>
    </location>
</feature>
<feature type="modified residue" description="Phosphoserine" evidence="7">
    <location>
        <position position="590"/>
    </location>
</feature>
<feature type="modified residue" description="Phosphothreonine" evidence="3">
    <location>
        <position position="612"/>
    </location>
</feature>
<evidence type="ECO:0000250" key="1"/>
<evidence type="ECO:0000250" key="2">
    <source>
        <dbReference type="UniProtKB" id="Q9DBS5"/>
    </source>
</evidence>
<evidence type="ECO:0000250" key="3">
    <source>
        <dbReference type="UniProtKB" id="Q9NSK0"/>
    </source>
</evidence>
<evidence type="ECO:0000255" key="4"/>
<evidence type="ECO:0000256" key="5">
    <source>
        <dbReference type="SAM" id="MobiDB-lite"/>
    </source>
</evidence>
<evidence type="ECO:0000305" key="6"/>
<evidence type="ECO:0007744" key="7">
    <source>
    </source>
</evidence>